<keyword id="KW-0025">Alternative splicing</keyword>
<keyword id="KW-0225">Disease variant</keyword>
<keyword id="KW-0991">Intellectual disability</keyword>
<keyword id="KW-0489">Methyltransferase</keyword>
<keyword id="KW-0597">Phosphoprotein</keyword>
<keyword id="KW-1267">Proteomics identification</keyword>
<keyword id="KW-1185">Reference proteome</keyword>
<keyword id="KW-0949">S-adenosyl-L-methionine</keyword>
<keyword id="KW-0808">Transferase</keyword>
<reference key="1">
    <citation type="journal article" date="2000" name="Genome Res.">
        <title>Identification of novel human genes evolutionarily conserved in Caenorhabditis elegans by comparative proteomics.</title>
        <authorList>
            <person name="Lai C.-H."/>
            <person name="Chou C.-Y."/>
            <person name="Ch'ang L.-Y."/>
            <person name="Liu C.-S."/>
            <person name="Lin W.-C."/>
        </authorList>
    </citation>
    <scope>NUCLEOTIDE SEQUENCE [LARGE SCALE MRNA] (ISOFORM 5)</scope>
</reference>
<reference key="2">
    <citation type="journal article" date="2000" name="Proc. Natl. Acad. Sci. U.S.A.">
        <title>Gene expression profiling in the human hypothalamus-pituitary-adrenal axis and full-length cDNA cloning.</title>
        <authorList>
            <person name="Hu R.-M."/>
            <person name="Han Z.-G."/>
            <person name="Song H.-D."/>
            <person name="Peng Y.-D."/>
            <person name="Huang Q.-H."/>
            <person name="Ren S.-X."/>
            <person name="Gu Y.-J."/>
            <person name="Huang C.-H."/>
            <person name="Li Y.-B."/>
            <person name="Jiang C.-L."/>
            <person name="Fu G."/>
            <person name="Zhang Q.-H."/>
            <person name="Gu B.-W."/>
            <person name="Dai M."/>
            <person name="Mao Y.-F."/>
            <person name="Gao G.-F."/>
            <person name="Rong R."/>
            <person name="Ye M."/>
            <person name="Zhou J."/>
            <person name="Xu S.-H."/>
            <person name="Gu J."/>
            <person name="Shi J.-X."/>
            <person name="Jin W.-R."/>
            <person name="Zhang C.-K."/>
            <person name="Wu T.-M."/>
            <person name="Huang G.-Y."/>
            <person name="Chen Z."/>
            <person name="Chen M.-D."/>
            <person name="Chen J.-L."/>
        </authorList>
    </citation>
    <scope>NUCLEOTIDE SEQUENCE [LARGE SCALE MRNA] (ISOFORM 2)</scope>
    <source>
        <tissue>Adrenal gland</tissue>
    </source>
</reference>
<reference key="3">
    <citation type="journal article" date="2000" name="Genome Res.">
        <title>Cloning and functional analysis of cDNAs with open reading frames for 300 previously undefined genes expressed in CD34+ hematopoietic stem/progenitor cells.</title>
        <authorList>
            <person name="Zhang Q.-H."/>
            <person name="Ye M."/>
            <person name="Wu X.-Y."/>
            <person name="Ren S.-X."/>
            <person name="Zhao M."/>
            <person name="Zhao C.-J."/>
            <person name="Fu G."/>
            <person name="Shen Y."/>
            <person name="Fan H.-Y."/>
            <person name="Lu G."/>
            <person name="Zhong M."/>
            <person name="Xu X.-R."/>
            <person name="Han Z.-G."/>
            <person name="Zhang J.-W."/>
            <person name="Tao J."/>
            <person name="Huang Q.-H."/>
            <person name="Zhou J."/>
            <person name="Hu G.-X."/>
            <person name="Gu J."/>
            <person name="Chen S.-J."/>
            <person name="Chen Z."/>
        </authorList>
    </citation>
    <scope>NUCLEOTIDE SEQUENCE [LARGE SCALE MRNA] (ISOFORM 3)</scope>
    <source>
        <tissue>Umbilical cord blood</tissue>
    </source>
</reference>
<reference key="4">
    <citation type="submission" date="2000-03" db="EMBL/GenBank/DDBJ databases">
        <authorList>
            <person name="Yang Y."/>
            <person name="Xu X."/>
            <person name="Gao G."/>
            <person name="Xiao H."/>
            <person name="Chen Z."/>
            <person name="Han Z."/>
        </authorList>
    </citation>
    <scope>NUCLEOTIDE SEQUENCE [LARGE SCALE MRNA] (ISOFORM 4)</scope>
    <source>
        <tissue>Pituitary</tissue>
    </source>
</reference>
<reference key="5">
    <citation type="journal article" date="2004" name="Nat. Genet.">
        <title>Complete sequencing and characterization of 21,243 full-length human cDNAs.</title>
        <authorList>
            <person name="Ota T."/>
            <person name="Suzuki Y."/>
            <person name="Nishikawa T."/>
            <person name="Otsuki T."/>
            <person name="Sugiyama T."/>
            <person name="Irie R."/>
            <person name="Wakamatsu A."/>
            <person name="Hayashi K."/>
            <person name="Sato H."/>
            <person name="Nagai K."/>
            <person name="Kimura K."/>
            <person name="Makita H."/>
            <person name="Sekine M."/>
            <person name="Obayashi M."/>
            <person name="Nishi T."/>
            <person name="Shibahara T."/>
            <person name="Tanaka T."/>
            <person name="Ishii S."/>
            <person name="Yamamoto J."/>
            <person name="Saito K."/>
            <person name="Kawai Y."/>
            <person name="Isono Y."/>
            <person name="Nakamura Y."/>
            <person name="Nagahari K."/>
            <person name="Murakami K."/>
            <person name="Yasuda T."/>
            <person name="Iwayanagi T."/>
            <person name="Wagatsuma M."/>
            <person name="Shiratori A."/>
            <person name="Sudo H."/>
            <person name="Hosoiri T."/>
            <person name="Kaku Y."/>
            <person name="Kodaira H."/>
            <person name="Kondo H."/>
            <person name="Sugawara M."/>
            <person name="Takahashi M."/>
            <person name="Kanda K."/>
            <person name="Yokoi T."/>
            <person name="Furuya T."/>
            <person name="Kikkawa E."/>
            <person name="Omura Y."/>
            <person name="Abe K."/>
            <person name="Kamihara K."/>
            <person name="Katsuta N."/>
            <person name="Sato K."/>
            <person name="Tanikawa M."/>
            <person name="Yamazaki M."/>
            <person name="Ninomiya K."/>
            <person name="Ishibashi T."/>
            <person name="Yamashita H."/>
            <person name="Murakawa K."/>
            <person name="Fujimori K."/>
            <person name="Tanai H."/>
            <person name="Kimata M."/>
            <person name="Watanabe M."/>
            <person name="Hiraoka S."/>
            <person name="Chiba Y."/>
            <person name="Ishida S."/>
            <person name="Ono Y."/>
            <person name="Takiguchi S."/>
            <person name="Watanabe S."/>
            <person name="Yosida M."/>
            <person name="Hotuta T."/>
            <person name="Kusano J."/>
            <person name="Kanehori K."/>
            <person name="Takahashi-Fujii A."/>
            <person name="Hara H."/>
            <person name="Tanase T.-O."/>
            <person name="Nomura Y."/>
            <person name="Togiya S."/>
            <person name="Komai F."/>
            <person name="Hara R."/>
            <person name="Takeuchi K."/>
            <person name="Arita M."/>
            <person name="Imose N."/>
            <person name="Musashino K."/>
            <person name="Yuuki H."/>
            <person name="Oshima A."/>
            <person name="Sasaki N."/>
            <person name="Aotsuka S."/>
            <person name="Yoshikawa Y."/>
            <person name="Matsunawa H."/>
            <person name="Ichihara T."/>
            <person name="Shiohata N."/>
            <person name="Sano S."/>
            <person name="Moriya S."/>
            <person name="Momiyama H."/>
            <person name="Satoh N."/>
            <person name="Takami S."/>
            <person name="Terashima Y."/>
            <person name="Suzuki O."/>
            <person name="Nakagawa S."/>
            <person name="Senoh A."/>
            <person name="Mizoguchi H."/>
            <person name="Goto Y."/>
            <person name="Shimizu F."/>
            <person name="Wakebe H."/>
            <person name="Hishigaki H."/>
            <person name="Watanabe T."/>
            <person name="Sugiyama A."/>
            <person name="Takemoto M."/>
            <person name="Kawakami B."/>
            <person name="Yamazaki M."/>
            <person name="Watanabe K."/>
            <person name="Kumagai A."/>
            <person name="Itakura S."/>
            <person name="Fukuzumi Y."/>
            <person name="Fujimori Y."/>
            <person name="Komiyama M."/>
            <person name="Tashiro H."/>
            <person name="Tanigami A."/>
            <person name="Fujiwara T."/>
            <person name="Ono T."/>
            <person name="Yamada K."/>
            <person name="Fujii Y."/>
            <person name="Ozaki K."/>
            <person name="Hirao M."/>
            <person name="Ohmori Y."/>
            <person name="Kawabata A."/>
            <person name="Hikiji T."/>
            <person name="Kobatake N."/>
            <person name="Inagaki H."/>
            <person name="Ikema Y."/>
            <person name="Okamoto S."/>
            <person name="Okitani R."/>
            <person name="Kawakami T."/>
            <person name="Noguchi S."/>
            <person name="Itoh T."/>
            <person name="Shigeta K."/>
            <person name="Senba T."/>
            <person name="Matsumura K."/>
            <person name="Nakajima Y."/>
            <person name="Mizuno T."/>
            <person name="Morinaga M."/>
            <person name="Sasaki M."/>
            <person name="Togashi T."/>
            <person name="Oyama M."/>
            <person name="Hata H."/>
            <person name="Watanabe M."/>
            <person name="Komatsu T."/>
            <person name="Mizushima-Sugano J."/>
            <person name="Satoh T."/>
            <person name="Shirai Y."/>
            <person name="Takahashi Y."/>
            <person name="Nakagawa K."/>
            <person name="Okumura K."/>
            <person name="Nagase T."/>
            <person name="Nomura N."/>
            <person name="Kikuchi H."/>
            <person name="Masuho Y."/>
            <person name="Yamashita R."/>
            <person name="Nakai K."/>
            <person name="Yada T."/>
            <person name="Nakamura Y."/>
            <person name="Ohara O."/>
            <person name="Isogai T."/>
            <person name="Sugano S."/>
        </authorList>
    </citation>
    <scope>NUCLEOTIDE SEQUENCE [LARGE SCALE MRNA] (ISOFORM 6)</scope>
</reference>
<reference key="6">
    <citation type="journal article" date="2006" name="Nature">
        <title>The DNA sequence and biological annotation of human chromosome 1.</title>
        <authorList>
            <person name="Gregory S.G."/>
            <person name="Barlow K.F."/>
            <person name="McLay K.E."/>
            <person name="Kaul R."/>
            <person name="Swarbreck D."/>
            <person name="Dunham A."/>
            <person name="Scott C.E."/>
            <person name="Howe K.L."/>
            <person name="Woodfine K."/>
            <person name="Spencer C.C.A."/>
            <person name="Jones M.C."/>
            <person name="Gillson C."/>
            <person name="Searle S."/>
            <person name="Zhou Y."/>
            <person name="Kokocinski F."/>
            <person name="McDonald L."/>
            <person name="Evans R."/>
            <person name="Phillips K."/>
            <person name="Atkinson A."/>
            <person name="Cooper R."/>
            <person name="Jones C."/>
            <person name="Hall R.E."/>
            <person name="Andrews T.D."/>
            <person name="Lloyd C."/>
            <person name="Ainscough R."/>
            <person name="Almeida J.P."/>
            <person name="Ambrose K.D."/>
            <person name="Anderson F."/>
            <person name="Andrew R.W."/>
            <person name="Ashwell R.I.S."/>
            <person name="Aubin K."/>
            <person name="Babbage A.K."/>
            <person name="Bagguley C.L."/>
            <person name="Bailey J."/>
            <person name="Beasley H."/>
            <person name="Bethel G."/>
            <person name="Bird C.P."/>
            <person name="Bray-Allen S."/>
            <person name="Brown J.Y."/>
            <person name="Brown A.J."/>
            <person name="Buckley D."/>
            <person name="Burton J."/>
            <person name="Bye J."/>
            <person name="Carder C."/>
            <person name="Chapman J.C."/>
            <person name="Clark S.Y."/>
            <person name="Clarke G."/>
            <person name="Clee C."/>
            <person name="Cobley V."/>
            <person name="Collier R.E."/>
            <person name="Corby N."/>
            <person name="Coville G.J."/>
            <person name="Davies J."/>
            <person name="Deadman R."/>
            <person name="Dunn M."/>
            <person name="Earthrowl M."/>
            <person name="Ellington A.G."/>
            <person name="Errington H."/>
            <person name="Frankish A."/>
            <person name="Frankland J."/>
            <person name="French L."/>
            <person name="Garner P."/>
            <person name="Garnett J."/>
            <person name="Gay L."/>
            <person name="Ghori M.R.J."/>
            <person name="Gibson R."/>
            <person name="Gilby L.M."/>
            <person name="Gillett W."/>
            <person name="Glithero R.J."/>
            <person name="Grafham D.V."/>
            <person name="Griffiths C."/>
            <person name="Griffiths-Jones S."/>
            <person name="Grocock R."/>
            <person name="Hammond S."/>
            <person name="Harrison E.S.I."/>
            <person name="Hart E."/>
            <person name="Haugen E."/>
            <person name="Heath P.D."/>
            <person name="Holmes S."/>
            <person name="Holt K."/>
            <person name="Howden P.J."/>
            <person name="Hunt A.R."/>
            <person name="Hunt S.E."/>
            <person name="Hunter G."/>
            <person name="Isherwood J."/>
            <person name="James R."/>
            <person name="Johnson C."/>
            <person name="Johnson D."/>
            <person name="Joy A."/>
            <person name="Kay M."/>
            <person name="Kershaw J.K."/>
            <person name="Kibukawa M."/>
            <person name="Kimberley A.M."/>
            <person name="King A."/>
            <person name="Knights A.J."/>
            <person name="Lad H."/>
            <person name="Laird G."/>
            <person name="Lawlor S."/>
            <person name="Leongamornlert D.A."/>
            <person name="Lloyd D.M."/>
            <person name="Loveland J."/>
            <person name="Lovell J."/>
            <person name="Lush M.J."/>
            <person name="Lyne R."/>
            <person name="Martin S."/>
            <person name="Mashreghi-Mohammadi M."/>
            <person name="Matthews L."/>
            <person name="Matthews N.S.W."/>
            <person name="McLaren S."/>
            <person name="Milne S."/>
            <person name="Mistry S."/>
            <person name="Moore M.J.F."/>
            <person name="Nickerson T."/>
            <person name="O'Dell C.N."/>
            <person name="Oliver K."/>
            <person name="Palmeiri A."/>
            <person name="Palmer S.A."/>
            <person name="Parker A."/>
            <person name="Patel D."/>
            <person name="Pearce A.V."/>
            <person name="Peck A.I."/>
            <person name="Pelan S."/>
            <person name="Phelps K."/>
            <person name="Phillimore B.J."/>
            <person name="Plumb R."/>
            <person name="Rajan J."/>
            <person name="Raymond C."/>
            <person name="Rouse G."/>
            <person name="Saenphimmachak C."/>
            <person name="Sehra H.K."/>
            <person name="Sheridan E."/>
            <person name="Shownkeen R."/>
            <person name="Sims S."/>
            <person name="Skuce C.D."/>
            <person name="Smith M."/>
            <person name="Steward C."/>
            <person name="Subramanian S."/>
            <person name="Sycamore N."/>
            <person name="Tracey A."/>
            <person name="Tromans A."/>
            <person name="Van Helmond Z."/>
            <person name="Wall M."/>
            <person name="Wallis J.M."/>
            <person name="White S."/>
            <person name="Whitehead S.L."/>
            <person name="Wilkinson J.E."/>
            <person name="Willey D.L."/>
            <person name="Williams H."/>
            <person name="Wilming L."/>
            <person name="Wray P.W."/>
            <person name="Wu Z."/>
            <person name="Coulson A."/>
            <person name="Vaudin M."/>
            <person name="Sulston J.E."/>
            <person name="Durbin R.M."/>
            <person name="Hubbard T."/>
            <person name="Wooster R."/>
            <person name="Dunham I."/>
            <person name="Carter N.P."/>
            <person name="McVean G."/>
            <person name="Ross M.T."/>
            <person name="Harrow J."/>
            <person name="Olson M.V."/>
            <person name="Beck S."/>
            <person name="Rogers J."/>
            <person name="Bentley D.R."/>
        </authorList>
    </citation>
    <scope>NUCLEOTIDE SEQUENCE [LARGE SCALE GENOMIC DNA]</scope>
</reference>
<reference key="7">
    <citation type="submission" date="2005-09" db="EMBL/GenBank/DDBJ databases">
        <authorList>
            <person name="Mural R.J."/>
            <person name="Istrail S."/>
            <person name="Sutton G.G."/>
            <person name="Florea L."/>
            <person name="Halpern A.L."/>
            <person name="Mobarry C.M."/>
            <person name="Lippert R."/>
            <person name="Walenz B."/>
            <person name="Shatkay H."/>
            <person name="Dew I."/>
            <person name="Miller J.R."/>
            <person name="Flanigan M.J."/>
            <person name="Edwards N.J."/>
            <person name="Bolanos R."/>
            <person name="Fasulo D."/>
            <person name="Halldorsson B.V."/>
            <person name="Hannenhalli S."/>
            <person name="Turner R."/>
            <person name="Yooseph S."/>
            <person name="Lu F."/>
            <person name="Nusskern D.R."/>
            <person name="Shue B.C."/>
            <person name="Zheng X.H."/>
            <person name="Zhong F."/>
            <person name="Delcher A.L."/>
            <person name="Huson D.H."/>
            <person name="Kravitz S.A."/>
            <person name="Mouchard L."/>
            <person name="Reinert K."/>
            <person name="Remington K.A."/>
            <person name="Clark A.G."/>
            <person name="Waterman M.S."/>
            <person name="Eichler E.E."/>
            <person name="Adams M.D."/>
            <person name="Hunkapiller M.W."/>
            <person name="Myers E.W."/>
            <person name="Venter J.C."/>
        </authorList>
    </citation>
    <scope>NUCLEOTIDE SEQUENCE [LARGE SCALE GENOMIC DNA]</scope>
</reference>
<reference key="8">
    <citation type="journal article" date="2004" name="Genome Res.">
        <title>The status, quality, and expansion of the NIH full-length cDNA project: the Mammalian Gene Collection (MGC).</title>
        <authorList>
            <consortium name="The MGC Project Team"/>
        </authorList>
    </citation>
    <scope>NUCLEOTIDE SEQUENCE [LARGE SCALE MRNA] (ISOFORM 1)</scope>
    <source>
        <tissue>Eye</tissue>
    </source>
</reference>
<reference key="9">
    <citation type="journal article" date="2011" name="BMC Syst. Biol.">
        <title>Initial characterization of the human central proteome.</title>
        <authorList>
            <person name="Burkard T.R."/>
            <person name="Planyavsky M."/>
            <person name="Kaupe I."/>
            <person name="Breitwieser F.P."/>
            <person name="Buerckstuemmer T."/>
            <person name="Bennett K.L."/>
            <person name="Superti-Furga G."/>
            <person name="Colinge J."/>
        </authorList>
    </citation>
    <scope>IDENTIFICATION BY MASS SPECTROMETRY [LARGE SCALE ANALYSIS]</scope>
</reference>
<reference key="10">
    <citation type="journal article" date="2013" name="J. Biol. Chem.">
        <title>A modified form of diphthamide causes immunotoxin resistance in a lymphoma cell line with a deletion of the WDR85 gene.</title>
        <authorList>
            <person name="Wei H."/>
            <person name="Bera T.K."/>
            <person name="Wayne A.S."/>
            <person name="Xiang L."/>
            <person name="Colantonio S."/>
            <person name="Chertov O."/>
            <person name="Pastan I."/>
        </authorList>
    </citation>
    <scope>FUNCTION IN DIPHTHAMIDE BIOSYNTHESIS</scope>
</reference>
<reference key="11">
    <citation type="journal article" date="2013" name="J. Proteome Res.">
        <title>Toward a comprehensive characterization of a human cancer cell phosphoproteome.</title>
        <authorList>
            <person name="Zhou H."/>
            <person name="Di Palma S."/>
            <person name="Preisinger C."/>
            <person name="Peng M."/>
            <person name="Polat A.N."/>
            <person name="Heck A.J."/>
            <person name="Mohammed S."/>
        </authorList>
    </citation>
    <scope>PHOSPHORYLATION [LARGE SCALE ANALYSIS] AT SER-171</scope>
    <scope>IDENTIFICATION BY MASS SPECTROMETRY [LARGE SCALE ANALYSIS]</scope>
    <source>
        <tissue>Erythroleukemia</tissue>
    </source>
</reference>
<reference key="12">
    <citation type="journal article" date="2022" name="Genet. Med.">
        <title>A novel DPH5-related diphthamide-deficiency syndrome causing embryonic lethality or profound neurodevelopmental disorder.</title>
        <authorList>
            <consortium name="Undiagnosed Diseases Network"/>
            <person name="Shankar S.P."/>
            <person name="Grimsrud K."/>
            <person name="Lanoue L."/>
            <person name="Egense A."/>
            <person name="Willis B."/>
            <person name="Hoerberg J."/>
            <person name="AlAbdi L."/>
            <person name="Mayer K."/>
            <person name="Uetkuer K."/>
            <person name="Monaghan K.G."/>
            <person name="Krier J."/>
            <person name="Stoler J."/>
            <person name="Alnemer M."/>
            <person name="Shankar P.R."/>
            <person name="Schaffrath R."/>
            <person name="Alkuraya F.S."/>
            <person name="Brinkmann U."/>
            <person name="Eriksson L.A."/>
            <person name="Lloyd K."/>
            <person name="Rauen K.A."/>
        </authorList>
    </citation>
    <scope>INVOLVEMENT IN NEDSFF</scope>
    <scope>VARIANTS NEDSFF SER-110; 207-ARG--LEU-285 DEL AND ARG-260</scope>
    <scope>CHARACTERIZATION OF VARIANTS NEDSFF SER-110; 207-ARG--LEU-285 DEL AND ARG-260</scope>
</reference>
<reference key="13">
    <citation type="journal article" date="2022" name="Genet. Med.">
        <authorList>
            <consortium name="Undiagnosed Diseases Network"/>
            <person name="Shankar S.P."/>
            <person name="Grimsrud K."/>
            <person name="Lanoue L."/>
            <person name="Egense A."/>
            <person name="Willis B."/>
            <person name="Hoerberg J."/>
            <person name="AlAbdi L."/>
            <person name="Mayer K."/>
            <person name="Uetkuer K."/>
            <person name="Monaghan K.G."/>
            <person name="Krier J."/>
            <person name="Stoler J."/>
            <person name="Alnemer M."/>
            <person name="Shankar P.R."/>
            <person name="Schaffrath R."/>
            <person name="Alkuraya F.S."/>
            <person name="Brinkmann U."/>
            <person name="Eriksson L.A."/>
            <person name="Lloyd K."/>
            <person name="Rauen K.A."/>
        </authorList>
    </citation>
    <scope>ERRATUM OF PUBMED:35482014</scope>
</reference>
<protein>
    <recommendedName>
        <fullName>Diphthine methyl ester synthase</fullName>
        <ecNumber>2.1.1.314</ecNumber>
    </recommendedName>
    <alternativeName>
        <fullName>Diphthamide biosynthesis methyltransferase</fullName>
    </alternativeName>
</protein>
<gene>
    <name type="primary">DPH5</name>
    <name type="ORF">AD-018</name>
    <name type="ORF">CGI-30</name>
    <name type="ORF">HSPC143</name>
    <name type="ORF">NPD015</name>
</gene>
<comment type="function">
    <text evidence="2 3">S-adenosyl-L-methionine-dependent methyltransferase that catalyzes four methylations of the modified target histidine residue in translation elongation factor 2 (EF-2), to form an intermediate called diphthine methyl ester. The four successive methylation reactions represent the second step of diphthamide biosynthesis.</text>
</comment>
<comment type="catalytic activity">
    <reaction evidence="2">
        <text>2-[(3S)-amino-3-carboxypropyl]-L-histidyl-[translation elongation factor 2] + 4 S-adenosyl-L-methionine = diphthine methyl ester-[translation elongation factor 2] + 4 S-adenosyl-L-homocysteine + 3 H(+)</text>
        <dbReference type="Rhea" id="RHEA:42652"/>
        <dbReference type="Rhea" id="RHEA-COMP:9749"/>
        <dbReference type="Rhea" id="RHEA-COMP:10173"/>
        <dbReference type="ChEBI" id="CHEBI:15378"/>
        <dbReference type="ChEBI" id="CHEBI:57856"/>
        <dbReference type="ChEBI" id="CHEBI:59789"/>
        <dbReference type="ChEBI" id="CHEBI:73995"/>
        <dbReference type="ChEBI" id="CHEBI:79005"/>
        <dbReference type="EC" id="2.1.1.314"/>
    </reaction>
</comment>
<comment type="pathway">
    <text>Protein modification; peptidyl-diphthamide biosynthesis.</text>
</comment>
<comment type="alternative products">
    <event type="alternative splicing"/>
    <isoform>
        <id>Q9H2P9-1</id>
        <name>1</name>
        <sequence type="displayed"/>
    </isoform>
    <isoform>
        <id>Q9H2P9-2</id>
        <name>2</name>
        <sequence type="described" ref="VSP_008508"/>
    </isoform>
    <isoform>
        <id>Q9H2P9-3</id>
        <name>3</name>
        <sequence type="described" ref="VSP_008509"/>
    </isoform>
    <isoform>
        <id>Q9H2P9-4</id>
        <name>4</name>
        <sequence type="described" ref="VSP_008510"/>
    </isoform>
    <isoform>
        <id>Q9H2P9-5</id>
        <name>5</name>
        <sequence type="described" ref="VSP_008511"/>
    </isoform>
    <isoform>
        <id>Q9H2P9-6</id>
        <name>6</name>
        <sequence type="described" ref="VSP_043444"/>
    </isoform>
</comment>
<comment type="disease" evidence="4">
    <disease id="DI-06521">
        <name>Neurodevelopmental disorder with short stature, prominent forehead, and feeding difficulties</name>
        <acronym>NEDSFF</acronym>
        <description>An autosomal recessive disorder characterized by distinct craniofacial features, multisystem dysfunction, profound neurodevelopmental delays, and neonatal death.</description>
        <dbReference type="MIM" id="620070"/>
    </disease>
    <text>The disease is caused by variants affecting the gene represented in this entry.</text>
</comment>
<comment type="similarity">
    <text evidence="10">Belongs to the diphthine synthase family.</text>
</comment>
<accession>Q9H2P9</accession>
<accession>A8JZY6</accession>
<accession>D3DT62</accession>
<accession>Q9P017</accession>
<accession>Q9P0I4</accession>
<accession>Q9Y319</accession>
<sequence>MLYLIGLGLGDAKDITVKGLEVVRRCSRVYLEAYTSVLTVGKEALEEFYGRKLVVADREEVEQEADNILKDADISDVAFLVVGDPFGATTHSDLVLRATKLGIPYRVIHNASIMNAVGCCGLQLYKFGETVSIVFWTDTWRPESFFDKVKKNRQNGMHTLCLLDIKVKEQSLENLIKGRKIYEPPRYMSVNQAAQQLLEIVQNQRIRGEEPAVTEETLCVGLARVGADDQKIAAGTLRQMCTVDLGEPLHSLIITGGSIHPMEMEMLSLFSIPENSSESQSINGL</sequence>
<dbReference type="EC" id="2.1.1.314"/>
<dbReference type="EMBL" id="AF132964">
    <property type="protein sequence ID" value="AAD27739.1"/>
    <property type="molecule type" value="mRNA"/>
</dbReference>
<dbReference type="EMBL" id="AF157319">
    <property type="protein sequence ID" value="AAF67485.1"/>
    <property type="molecule type" value="mRNA"/>
</dbReference>
<dbReference type="EMBL" id="AF161492">
    <property type="protein sequence ID" value="AAF29107.1"/>
    <property type="molecule type" value="mRNA"/>
</dbReference>
<dbReference type="EMBL" id="AF248965">
    <property type="protein sequence ID" value="AAG44563.1"/>
    <property type="molecule type" value="mRNA"/>
</dbReference>
<dbReference type="EMBL" id="AK289351">
    <property type="protein sequence ID" value="BAF82040.1"/>
    <property type="molecule type" value="mRNA"/>
</dbReference>
<dbReference type="EMBL" id="AC093157">
    <property type="status" value="NOT_ANNOTATED_CDS"/>
    <property type="molecule type" value="Genomic_DNA"/>
</dbReference>
<dbReference type="EMBL" id="CH471097">
    <property type="protein sequence ID" value="EAW72933.1"/>
    <property type="molecule type" value="Genomic_DNA"/>
</dbReference>
<dbReference type="EMBL" id="CH471097">
    <property type="protein sequence ID" value="EAW72937.1"/>
    <property type="molecule type" value="Genomic_DNA"/>
</dbReference>
<dbReference type="EMBL" id="CH471097">
    <property type="protein sequence ID" value="EAW72938.1"/>
    <property type="molecule type" value="Genomic_DNA"/>
</dbReference>
<dbReference type="EMBL" id="CH471097">
    <property type="protein sequence ID" value="EAW72940.1"/>
    <property type="molecule type" value="Genomic_DNA"/>
</dbReference>
<dbReference type="EMBL" id="BC053857">
    <property type="protein sequence ID" value="AAH53857.1"/>
    <property type="molecule type" value="mRNA"/>
</dbReference>
<dbReference type="CCDS" id="CCDS41358.1">
    <molecule id="Q9H2P9-1"/>
</dbReference>
<dbReference type="CCDS" id="CCDS41359.1">
    <molecule id="Q9H2P9-6"/>
</dbReference>
<dbReference type="RefSeq" id="NP_001070862.1">
    <molecule id="Q9H2P9-1"/>
    <property type="nucleotide sequence ID" value="NM_001077394.2"/>
</dbReference>
<dbReference type="RefSeq" id="NP_001070863.1">
    <molecule id="Q9H2P9-6"/>
    <property type="nucleotide sequence ID" value="NM_001077395.2"/>
</dbReference>
<dbReference type="RefSeq" id="NP_057042.2">
    <molecule id="Q9H2P9-1"/>
    <property type="nucleotide sequence ID" value="NM_015958.3"/>
</dbReference>
<dbReference type="RefSeq" id="XP_016856949.1">
    <property type="nucleotide sequence ID" value="XM_017001460.1"/>
</dbReference>
<dbReference type="RefSeq" id="XP_047278469.1">
    <molecule id="Q9H2P9-6"/>
    <property type="nucleotide sequence ID" value="XM_047422513.1"/>
</dbReference>
<dbReference type="RefSeq" id="XP_054192957.1">
    <molecule id="Q9H2P9-6"/>
    <property type="nucleotide sequence ID" value="XM_054336982.1"/>
</dbReference>
<dbReference type="SMR" id="Q9H2P9"/>
<dbReference type="BioGRID" id="119637">
    <property type="interactions" value="27"/>
</dbReference>
<dbReference type="FunCoup" id="Q9H2P9">
    <property type="interactions" value="1151"/>
</dbReference>
<dbReference type="IntAct" id="Q9H2P9">
    <property type="interactions" value="2"/>
</dbReference>
<dbReference type="STRING" id="9606.ENSP00000359127"/>
<dbReference type="DrugBank" id="DB01752">
    <property type="generic name" value="S-adenosyl-L-homocysteine"/>
</dbReference>
<dbReference type="GlyGen" id="Q9H2P9">
    <property type="glycosylation" value="1 site, 1 O-linked glycan (1 site)"/>
</dbReference>
<dbReference type="iPTMnet" id="Q9H2P9"/>
<dbReference type="PhosphoSitePlus" id="Q9H2P9"/>
<dbReference type="BioMuta" id="DPH5"/>
<dbReference type="DMDM" id="46397414"/>
<dbReference type="jPOST" id="Q9H2P9"/>
<dbReference type="MassIVE" id="Q9H2P9"/>
<dbReference type="PaxDb" id="9606-ENSP00000359127"/>
<dbReference type="PeptideAtlas" id="Q9H2P9"/>
<dbReference type="ProteomicsDB" id="80572">
    <molecule id="Q9H2P9-1"/>
</dbReference>
<dbReference type="ProteomicsDB" id="80573">
    <molecule id="Q9H2P9-2"/>
</dbReference>
<dbReference type="ProteomicsDB" id="80574">
    <molecule id="Q9H2P9-3"/>
</dbReference>
<dbReference type="ProteomicsDB" id="80575">
    <molecule id="Q9H2P9-4"/>
</dbReference>
<dbReference type="ProteomicsDB" id="80576">
    <molecule id="Q9H2P9-5"/>
</dbReference>
<dbReference type="ProteomicsDB" id="80577">
    <molecule id="Q9H2P9-6"/>
</dbReference>
<dbReference type="Pumba" id="Q9H2P9"/>
<dbReference type="Antibodypedia" id="33698">
    <property type="antibodies" value="27 antibodies from 8 providers"/>
</dbReference>
<dbReference type="DNASU" id="51611"/>
<dbReference type="Ensembl" id="ENST00000342173.11">
    <molecule id="Q9H2P9-6"/>
    <property type="protein sequence ID" value="ENSP00000339630.7"/>
    <property type="gene ID" value="ENSG00000117543.22"/>
</dbReference>
<dbReference type="Ensembl" id="ENST00000370109.8">
    <molecule id="Q9H2P9-1"/>
    <property type="protein sequence ID" value="ENSP00000359127.3"/>
    <property type="gene ID" value="ENSG00000117543.22"/>
</dbReference>
<dbReference type="Ensembl" id="ENST00000427040.3">
    <molecule id="Q9H2P9-1"/>
    <property type="protein sequence ID" value="ENSP00000394364.3"/>
    <property type="gene ID" value="ENSG00000117543.22"/>
</dbReference>
<dbReference type="Ensembl" id="ENST00000488176.1">
    <molecule id="Q9H2P9-1"/>
    <property type="protein sequence ID" value="ENSP00000418282.1"/>
    <property type="gene ID" value="ENSG00000117543.22"/>
</dbReference>
<dbReference type="GeneID" id="51611"/>
<dbReference type="KEGG" id="hsa:51611"/>
<dbReference type="MANE-Select" id="ENST00000370109.8">
    <property type="protein sequence ID" value="ENSP00000359127.3"/>
    <property type="RefSeq nucleotide sequence ID" value="NM_015958.3"/>
    <property type="RefSeq protein sequence ID" value="NP_057042.2"/>
</dbReference>
<dbReference type="UCSC" id="uc001dtr.4">
    <molecule id="Q9H2P9-1"/>
    <property type="organism name" value="human"/>
</dbReference>
<dbReference type="AGR" id="HGNC:24270"/>
<dbReference type="CTD" id="51611"/>
<dbReference type="DisGeNET" id="51611"/>
<dbReference type="GeneCards" id="DPH5"/>
<dbReference type="HGNC" id="HGNC:24270">
    <property type="gene designation" value="DPH5"/>
</dbReference>
<dbReference type="HPA" id="ENSG00000117543">
    <property type="expression patterns" value="Low tissue specificity"/>
</dbReference>
<dbReference type="MalaCards" id="DPH5"/>
<dbReference type="MIM" id="611075">
    <property type="type" value="gene"/>
</dbReference>
<dbReference type="MIM" id="620070">
    <property type="type" value="phenotype"/>
</dbReference>
<dbReference type="neXtProt" id="NX_Q9H2P9"/>
<dbReference type="OpenTargets" id="ENSG00000117543"/>
<dbReference type="PharmGKB" id="PA142671956"/>
<dbReference type="VEuPathDB" id="HostDB:ENSG00000117543"/>
<dbReference type="eggNOG" id="KOG3123">
    <property type="taxonomic scope" value="Eukaryota"/>
</dbReference>
<dbReference type="GeneTree" id="ENSGT00390000010568"/>
<dbReference type="HOGENOM" id="CLU_066040_1_0_1"/>
<dbReference type="InParanoid" id="Q9H2P9"/>
<dbReference type="OMA" id="HNASIMS"/>
<dbReference type="OrthoDB" id="2516at2759"/>
<dbReference type="PAN-GO" id="Q9H2P9">
    <property type="GO annotations" value="0 GO annotations based on evolutionary models"/>
</dbReference>
<dbReference type="PhylomeDB" id="Q9H2P9"/>
<dbReference type="TreeFam" id="TF105603"/>
<dbReference type="BRENDA" id="2.1.1.314">
    <property type="organism ID" value="2681"/>
</dbReference>
<dbReference type="PathwayCommons" id="Q9H2P9"/>
<dbReference type="Reactome" id="R-HSA-5358493">
    <property type="pathway name" value="Synthesis of diphthamide-EEF2"/>
</dbReference>
<dbReference type="SignaLink" id="Q9H2P9"/>
<dbReference type="SIGNOR" id="Q9H2P9"/>
<dbReference type="UniPathway" id="UPA00559"/>
<dbReference type="BioGRID-ORCS" id="51611">
    <property type="hits" value="166 hits in 1180 CRISPR screens"/>
</dbReference>
<dbReference type="ChiTaRS" id="DPH5">
    <property type="organism name" value="human"/>
</dbReference>
<dbReference type="GeneWiki" id="DPH5"/>
<dbReference type="GenomeRNAi" id="51611"/>
<dbReference type="Pharos" id="Q9H2P9">
    <property type="development level" value="Tbio"/>
</dbReference>
<dbReference type="PRO" id="PR:Q9H2P9"/>
<dbReference type="Proteomes" id="UP000005640">
    <property type="component" value="Chromosome 1"/>
</dbReference>
<dbReference type="RNAct" id="Q9H2P9">
    <property type="molecule type" value="protein"/>
</dbReference>
<dbReference type="Bgee" id="ENSG00000117543">
    <property type="expression patterns" value="Expressed in body of pancreas and 209 other cell types or tissues"/>
</dbReference>
<dbReference type="ExpressionAtlas" id="Q9H2P9">
    <property type="expression patterns" value="baseline and differential"/>
</dbReference>
<dbReference type="GO" id="GO:0005829">
    <property type="term" value="C:cytosol"/>
    <property type="evidence" value="ECO:0000304"/>
    <property type="project" value="Reactome"/>
</dbReference>
<dbReference type="GO" id="GO:0141133">
    <property type="term" value="F:diphthine methyl ester synthase activity"/>
    <property type="evidence" value="ECO:0000269"/>
    <property type="project" value="Reactome"/>
</dbReference>
<dbReference type="GO" id="GO:0032259">
    <property type="term" value="P:methylation"/>
    <property type="evidence" value="ECO:0007669"/>
    <property type="project" value="UniProtKB-KW"/>
</dbReference>
<dbReference type="GO" id="GO:0017183">
    <property type="term" value="P:protein histidyl modification to diphthamide"/>
    <property type="evidence" value="ECO:0000250"/>
    <property type="project" value="UniProtKB"/>
</dbReference>
<dbReference type="CDD" id="cd11647">
    <property type="entry name" value="DHP5_DphB"/>
    <property type="match status" value="1"/>
</dbReference>
<dbReference type="FunFam" id="3.30.950.10:FF:000004">
    <property type="entry name" value="Diphthine synthase putative"/>
    <property type="match status" value="1"/>
</dbReference>
<dbReference type="FunFam" id="3.40.1010.10:FF:000004">
    <property type="entry name" value="Putative diphthine synthase"/>
    <property type="match status" value="1"/>
</dbReference>
<dbReference type="Gene3D" id="3.40.1010.10">
    <property type="entry name" value="Cobalt-precorrin-4 Transmethylase, Domain 1"/>
    <property type="match status" value="1"/>
</dbReference>
<dbReference type="Gene3D" id="3.30.950.10">
    <property type="entry name" value="Methyltransferase, Cobalt-precorrin-4 Transmethylase, Domain 2"/>
    <property type="match status" value="1"/>
</dbReference>
<dbReference type="HAMAP" id="MF_01084">
    <property type="entry name" value="Diphthine_synth"/>
    <property type="match status" value="1"/>
</dbReference>
<dbReference type="InterPro" id="IPR000878">
    <property type="entry name" value="4pyrrol_Mease"/>
</dbReference>
<dbReference type="InterPro" id="IPR035996">
    <property type="entry name" value="4pyrrol_Methylase_sf"/>
</dbReference>
<dbReference type="InterPro" id="IPR014777">
    <property type="entry name" value="4pyrrole_Mease_sub1"/>
</dbReference>
<dbReference type="InterPro" id="IPR014776">
    <property type="entry name" value="4pyrrole_Mease_sub2"/>
</dbReference>
<dbReference type="InterPro" id="IPR004551">
    <property type="entry name" value="Dphthn_synthase"/>
</dbReference>
<dbReference type="NCBIfam" id="TIGR00522">
    <property type="entry name" value="dph5"/>
    <property type="match status" value="1"/>
</dbReference>
<dbReference type="PANTHER" id="PTHR10882:SF0">
    <property type="entry name" value="DIPHTHINE METHYL ESTER SYNTHASE"/>
    <property type="match status" value="1"/>
</dbReference>
<dbReference type="PANTHER" id="PTHR10882">
    <property type="entry name" value="DIPHTHINE SYNTHASE"/>
    <property type="match status" value="1"/>
</dbReference>
<dbReference type="Pfam" id="PF00590">
    <property type="entry name" value="TP_methylase"/>
    <property type="match status" value="1"/>
</dbReference>
<dbReference type="PIRSF" id="PIRSF036432">
    <property type="entry name" value="Diphthine_synth"/>
    <property type="match status" value="1"/>
</dbReference>
<dbReference type="SUPFAM" id="SSF53790">
    <property type="entry name" value="Tetrapyrrole methylase"/>
    <property type="match status" value="1"/>
</dbReference>
<feature type="chain" id="PRO_0000156133" description="Diphthine methyl ester synthase">
    <location>
        <begin position="1"/>
        <end position="285"/>
    </location>
</feature>
<feature type="binding site" evidence="1">
    <location>
        <position position="9"/>
    </location>
    <ligand>
        <name>S-adenosyl-L-methionine</name>
        <dbReference type="ChEBI" id="CHEBI:59789"/>
    </ligand>
</feature>
<feature type="binding site" evidence="1">
    <location>
        <position position="84"/>
    </location>
    <ligand>
        <name>S-adenosyl-L-methionine</name>
        <dbReference type="ChEBI" id="CHEBI:59789"/>
    </ligand>
</feature>
<feature type="binding site" evidence="1">
    <location>
        <position position="87"/>
    </location>
    <ligand>
        <name>S-adenosyl-L-methionine</name>
        <dbReference type="ChEBI" id="CHEBI:59789"/>
    </ligand>
</feature>
<feature type="binding site" evidence="1">
    <location>
        <begin position="112"/>
        <end position="113"/>
    </location>
    <ligand>
        <name>S-adenosyl-L-methionine</name>
        <dbReference type="ChEBI" id="CHEBI:59789"/>
    </ligand>
</feature>
<feature type="binding site" evidence="1">
    <location>
        <position position="163"/>
    </location>
    <ligand>
        <name>S-adenosyl-L-methionine</name>
        <dbReference type="ChEBI" id="CHEBI:59789"/>
    </ligand>
</feature>
<feature type="binding site" evidence="1">
    <location>
        <position position="225"/>
    </location>
    <ligand>
        <name>S-adenosyl-L-methionine</name>
        <dbReference type="ChEBI" id="CHEBI:59789"/>
    </ligand>
</feature>
<feature type="binding site" evidence="1">
    <location>
        <position position="250"/>
    </location>
    <ligand>
        <name>S-adenosyl-L-methionine</name>
        <dbReference type="ChEBI" id="CHEBI:59789"/>
    </ligand>
</feature>
<feature type="modified residue" description="Phosphoserine" evidence="11">
    <location>
        <position position="171"/>
    </location>
</feature>
<feature type="splice variant" id="VSP_008508" description="In isoform 2." evidence="6">
    <original>PFGATTHSDLVLRATKLGIPYRVIHNASIMNAVGCCGLQLYKFGETVSIVFWT</original>
    <variation>HL</variation>
    <location>
        <begin position="85"/>
        <end position="137"/>
    </location>
</feature>
<feature type="splice variant" id="VSP_008509" description="In isoform 3." evidence="7">
    <original>ATTHSDLVLRATKLGIPYRVIHNASIMNAVGCCGLQLYKFGETVSIVFWTDTWRPE</original>
    <variation>HLETR</variation>
    <location>
        <begin position="88"/>
        <end position="143"/>
    </location>
</feature>
<feature type="splice variant" id="VSP_008510" description="In isoform 4." evidence="9">
    <original>VGCCGLQLYKFGETVSIVFWTDTWR</original>
    <variation>EAAGGYRYISLERQVLLVFGQTLGG</variation>
    <location>
        <begin position="117"/>
        <end position="141"/>
    </location>
</feature>
<feature type="splice variant" id="VSP_008511" description="In isoform 5." evidence="5">
    <original>VFWT</original>
    <variation>MLISVMLHSLWLVIHL</variation>
    <location>
        <begin position="134"/>
        <end position="137"/>
    </location>
</feature>
<feature type="splice variant" id="VSP_043444" description="In isoform 6." evidence="8">
    <location>
        <position position="212"/>
    </location>
</feature>
<feature type="sequence variant" id="VAR_087842" description="In NEDSFF; decreased function in diphthamide biosynthesis shown in a yeast assay system." evidence="4">
    <original>N</original>
    <variation>S</variation>
    <location>
        <position position="110"/>
    </location>
</feature>
<feature type="sequence variant" id="VAR_087843" description="In NEDSFF; loss of function in diphthamide biosynthesis shown in a yeast assay system." evidence="4">
    <location>
        <begin position="207"/>
        <end position="285"/>
    </location>
</feature>
<feature type="sequence variant" id="VAR_087844" description="In NEDSFF; results in multisystem abnormalities in a homozygous mouse knockin model; decreased function in diphthamide biosynthesis shown in a yeast assay system." evidence="4">
    <original>H</original>
    <variation>R</variation>
    <location>
        <position position="260"/>
    </location>
</feature>
<feature type="sequence conflict" description="In Ref. 4; AAG44563." evidence="10" ref="4">
    <original>V</original>
    <variation>G</variation>
    <location>
        <position position="107"/>
    </location>
</feature>
<feature type="sequence conflict" description="In Ref. 2; AAF67485." evidence="10" ref="2">
    <original>L</original>
    <variation>FEHRYFHCLM</variation>
    <location>
        <position position="285"/>
    </location>
</feature>
<proteinExistence type="evidence at protein level"/>
<organism>
    <name type="scientific">Homo sapiens</name>
    <name type="common">Human</name>
    <dbReference type="NCBI Taxonomy" id="9606"/>
    <lineage>
        <taxon>Eukaryota</taxon>
        <taxon>Metazoa</taxon>
        <taxon>Chordata</taxon>
        <taxon>Craniata</taxon>
        <taxon>Vertebrata</taxon>
        <taxon>Euteleostomi</taxon>
        <taxon>Mammalia</taxon>
        <taxon>Eutheria</taxon>
        <taxon>Euarchontoglires</taxon>
        <taxon>Primates</taxon>
        <taxon>Haplorrhini</taxon>
        <taxon>Catarrhini</taxon>
        <taxon>Hominidae</taxon>
        <taxon>Homo</taxon>
    </lineage>
</organism>
<evidence type="ECO:0000250" key="1"/>
<evidence type="ECO:0000250" key="2">
    <source>
        <dbReference type="UniProtKB" id="P32469"/>
    </source>
</evidence>
<evidence type="ECO:0000269" key="3">
    <source>
    </source>
</evidence>
<evidence type="ECO:0000269" key="4">
    <source>
    </source>
</evidence>
<evidence type="ECO:0000303" key="5">
    <source>
    </source>
</evidence>
<evidence type="ECO:0000303" key="6">
    <source>
    </source>
</evidence>
<evidence type="ECO:0000303" key="7">
    <source>
    </source>
</evidence>
<evidence type="ECO:0000303" key="8">
    <source>
    </source>
</evidence>
<evidence type="ECO:0000303" key="9">
    <source ref="4"/>
</evidence>
<evidence type="ECO:0000305" key="10"/>
<evidence type="ECO:0007744" key="11">
    <source>
    </source>
</evidence>
<name>DPH5_HUMAN</name>